<accession>P9WHF5</accession>
<accession>L0TAR9</accession>
<accession>Q59570</accession>
<comment type="catalytic activity">
    <reaction>
        <text>thiosulfate + hydrogen cyanide = thiocyanate + sulfite + 2 H(+)</text>
        <dbReference type="Rhea" id="RHEA:16881"/>
        <dbReference type="ChEBI" id="CHEBI:15378"/>
        <dbReference type="ChEBI" id="CHEBI:17359"/>
        <dbReference type="ChEBI" id="CHEBI:18022"/>
        <dbReference type="ChEBI" id="CHEBI:18407"/>
        <dbReference type="ChEBI" id="CHEBI:33542"/>
        <dbReference type="EC" id="2.8.1.1"/>
    </reaction>
</comment>
<comment type="domain">
    <text evidence="1">Contains two rhodanese domains with different primary structures but with near identical secondary structure conformations suggesting a common evolutionary origin. Only the C-terminal rhodanese domain contains the catalytic cysteine residue (By similarity).</text>
</comment>
<comment type="miscellaneous">
    <text>Was identified as a high-confidence drug target.</text>
</comment>
<name>THT3_MYCTU</name>
<gene>
    <name type="primary">sseB</name>
    <name type="ordered locus">Rv2291</name>
    <name type="ORF">MTCY339.19c</name>
</gene>
<sequence>MQARGQVLITAAELAGMIQAGDPVSILDVRWRLDEPDGHAAYLQGHLPGAVFVSLEDELSDHTIAGRGRHPLPSGASLQATVRRCGIRHDVPVVVYDDWNRAGSARAWWVLTAAGIANVRILDGGLPAWRSAGGSIETGQVSPQLGNVTVLHDDLYAGQRLTLTAQQAGAGGVTLLDARVPERFRGDVEPVDAVAGHIPGAINVPSGSVLADDGTFLGNGALNALLSDHGIDHGGRVGVYCGSGVSAAVIVAALAVIGQDAELFPGSWSEWSSDPTRPVGRGTA</sequence>
<reference key="1">
    <citation type="journal article" date="1998" name="Nature">
        <title>Deciphering the biology of Mycobacterium tuberculosis from the complete genome sequence.</title>
        <authorList>
            <person name="Cole S.T."/>
            <person name="Brosch R."/>
            <person name="Parkhill J."/>
            <person name="Garnier T."/>
            <person name="Churcher C.M."/>
            <person name="Harris D.E."/>
            <person name="Gordon S.V."/>
            <person name="Eiglmeier K."/>
            <person name="Gas S."/>
            <person name="Barry C.E. III"/>
            <person name="Tekaia F."/>
            <person name="Badcock K."/>
            <person name="Basham D."/>
            <person name="Brown D."/>
            <person name="Chillingworth T."/>
            <person name="Connor R."/>
            <person name="Davies R.M."/>
            <person name="Devlin K."/>
            <person name="Feltwell T."/>
            <person name="Gentles S."/>
            <person name="Hamlin N."/>
            <person name="Holroyd S."/>
            <person name="Hornsby T."/>
            <person name="Jagels K."/>
            <person name="Krogh A."/>
            <person name="McLean J."/>
            <person name="Moule S."/>
            <person name="Murphy L.D."/>
            <person name="Oliver S."/>
            <person name="Osborne J."/>
            <person name="Quail M.A."/>
            <person name="Rajandream M.A."/>
            <person name="Rogers J."/>
            <person name="Rutter S."/>
            <person name="Seeger K."/>
            <person name="Skelton S."/>
            <person name="Squares S."/>
            <person name="Squares R."/>
            <person name="Sulston J.E."/>
            <person name="Taylor K."/>
            <person name="Whitehead S."/>
            <person name="Barrell B.G."/>
        </authorList>
    </citation>
    <scope>NUCLEOTIDE SEQUENCE [LARGE SCALE GENOMIC DNA]</scope>
    <source>
        <strain>ATCC 25618 / H37Rv</strain>
    </source>
</reference>
<reference key="2">
    <citation type="journal article" date="2008" name="BMC Syst. Biol.">
        <title>targetTB: a target identification pipeline for Mycobacterium tuberculosis through an interactome, reactome and genome-scale structural analysis.</title>
        <authorList>
            <person name="Raman K."/>
            <person name="Yeturu K."/>
            <person name="Chandra N."/>
        </authorList>
    </citation>
    <scope>IDENTIFICATION AS A DRUG TARGET [LARGE SCALE ANALYSIS]</scope>
</reference>
<reference key="3">
    <citation type="journal article" date="2011" name="Mol. Cell. Proteomics">
        <title>Proteogenomic analysis of Mycobacterium tuberculosis by high resolution mass spectrometry.</title>
        <authorList>
            <person name="Kelkar D.S."/>
            <person name="Kumar D."/>
            <person name="Kumar P."/>
            <person name="Balakrishnan L."/>
            <person name="Muthusamy B."/>
            <person name="Yadav A.K."/>
            <person name="Shrivastava P."/>
            <person name="Marimuthu A."/>
            <person name="Anand S."/>
            <person name="Sundaram H."/>
            <person name="Kingsbury R."/>
            <person name="Harsha H.C."/>
            <person name="Nair B."/>
            <person name="Prasad T.S."/>
            <person name="Chauhan D.S."/>
            <person name="Katoch K."/>
            <person name="Katoch V.M."/>
            <person name="Kumar P."/>
            <person name="Chaerkady R."/>
            <person name="Ramachandran S."/>
            <person name="Dash D."/>
            <person name="Pandey A."/>
        </authorList>
    </citation>
    <scope>IDENTIFICATION BY MASS SPECTROMETRY [LARGE SCALE ANALYSIS]</scope>
    <source>
        <strain>ATCC 25618 / H37Rv</strain>
    </source>
</reference>
<feature type="chain" id="PRO_0000139419" description="Putative thiosulfate sulfurtransferase SseB">
    <location>
        <begin position="1"/>
        <end position="284"/>
    </location>
</feature>
<feature type="domain" description="Rhodanese 1" evidence="2">
    <location>
        <begin position="20"/>
        <end position="138"/>
    </location>
</feature>
<feature type="domain" description="Rhodanese 2" evidence="2">
    <location>
        <begin position="169"/>
        <end position="280"/>
    </location>
</feature>
<feature type="active site" description="Cysteine persulfide intermediate" evidence="2">
    <location>
        <position position="241"/>
    </location>
</feature>
<feature type="binding site" evidence="1">
    <location>
        <position position="183"/>
    </location>
    <ligand>
        <name>substrate</name>
    </ligand>
</feature>
<protein>
    <recommendedName>
        <fullName>Putative thiosulfate sulfurtransferase SseB</fullName>
        <ecNumber>2.8.1.1</ecNumber>
    </recommendedName>
</protein>
<organism>
    <name type="scientific">Mycobacterium tuberculosis (strain ATCC 25618 / H37Rv)</name>
    <dbReference type="NCBI Taxonomy" id="83332"/>
    <lineage>
        <taxon>Bacteria</taxon>
        <taxon>Bacillati</taxon>
        <taxon>Actinomycetota</taxon>
        <taxon>Actinomycetes</taxon>
        <taxon>Mycobacteriales</taxon>
        <taxon>Mycobacteriaceae</taxon>
        <taxon>Mycobacterium</taxon>
        <taxon>Mycobacterium tuberculosis complex</taxon>
    </lineage>
</organism>
<evidence type="ECO:0000250" key="1"/>
<evidence type="ECO:0000255" key="2">
    <source>
        <dbReference type="PROSITE-ProRule" id="PRU00173"/>
    </source>
</evidence>
<proteinExistence type="evidence at protein level"/>
<dbReference type="EC" id="2.8.1.1"/>
<dbReference type="EMBL" id="AL123456">
    <property type="protein sequence ID" value="CCP45073.1"/>
    <property type="molecule type" value="Genomic_DNA"/>
</dbReference>
<dbReference type="PIR" id="G70732">
    <property type="entry name" value="G70732"/>
</dbReference>
<dbReference type="RefSeq" id="NP_216807.1">
    <property type="nucleotide sequence ID" value="NC_000962.3"/>
</dbReference>
<dbReference type="RefSeq" id="WP_003899253.1">
    <property type="nucleotide sequence ID" value="NZ_NVQJ01000012.1"/>
</dbReference>
<dbReference type="SMR" id="P9WHF5"/>
<dbReference type="FunCoup" id="P9WHF5">
    <property type="interactions" value="372"/>
</dbReference>
<dbReference type="STRING" id="83332.Rv2291"/>
<dbReference type="PaxDb" id="83332-Rv2291"/>
<dbReference type="DNASU" id="887174"/>
<dbReference type="GeneID" id="887174"/>
<dbReference type="KEGG" id="mtu:Rv2291"/>
<dbReference type="KEGG" id="mtv:RVBD_2291"/>
<dbReference type="TubercuList" id="Rv2291"/>
<dbReference type="eggNOG" id="COG2897">
    <property type="taxonomic scope" value="Bacteria"/>
</dbReference>
<dbReference type="InParanoid" id="P9WHF5"/>
<dbReference type="OrthoDB" id="9770030at2"/>
<dbReference type="PhylomeDB" id="P9WHF5"/>
<dbReference type="Proteomes" id="UP000001584">
    <property type="component" value="Chromosome"/>
</dbReference>
<dbReference type="GO" id="GO:0004792">
    <property type="term" value="F:thiosulfate-cyanide sulfurtransferase activity"/>
    <property type="evidence" value="ECO:0000318"/>
    <property type="project" value="GO_Central"/>
</dbReference>
<dbReference type="CDD" id="cd01448">
    <property type="entry name" value="TST_Repeat_1"/>
    <property type="match status" value="1"/>
</dbReference>
<dbReference type="CDD" id="cd01449">
    <property type="entry name" value="TST_Repeat_2"/>
    <property type="match status" value="1"/>
</dbReference>
<dbReference type="FunFam" id="3.40.250.10:FF:000035">
    <property type="entry name" value="Thiosulfate sulfurtransferase"/>
    <property type="match status" value="1"/>
</dbReference>
<dbReference type="FunFam" id="3.40.250.10:FF:000048">
    <property type="entry name" value="Thiosulfate sulfurtransferase"/>
    <property type="match status" value="1"/>
</dbReference>
<dbReference type="Gene3D" id="3.40.250.10">
    <property type="entry name" value="Rhodanese-like domain"/>
    <property type="match status" value="2"/>
</dbReference>
<dbReference type="InterPro" id="IPR001763">
    <property type="entry name" value="Rhodanese-like_dom"/>
</dbReference>
<dbReference type="InterPro" id="IPR036873">
    <property type="entry name" value="Rhodanese-like_dom_sf"/>
</dbReference>
<dbReference type="InterPro" id="IPR001307">
    <property type="entry name" value="Thiosulphate_STrfase_CS"/>
</dbReference>
<dbReference type="InterPro" id="IPR045078">
    <property type="entry name" value="TST/MPST-like"/>
</dbReference>
<dbReference type="PANTHER" id="PTHR11364:SF27">
    <property type="entry name" value="SULFURTRANSFERASE"/>
    <property type="match status" value="1"/>
</dbReference>
<dbReference type="PANTHER" id="PTHR11364">
    <property type="entry name" value="THIOSULFATE SULFERTANSFERASE"/>
    <property type="match status" value="1"/>
</dbReference>
<dbReference type="Pfam" id="PF00581">
    <property type="entry name" value="Rhodanese"/>
    <property type="match status" value="2"/>
</dbReference>
<dbReference type="SMART" id="SM00450">
    <property type="entry name" value="RHOD"/>
    <property type="match status" value="2"/>
</dbReference>
<dbReference type="SUPFAM" id="SSF52821">
    <property type="entry name" value="Rhodanese/Cell cycle control phosphatase"/>
    <property type="match status" value="2"/>
</dbReference>
<dbReference type="PROSITE" id="PS00380">
    <property type="entry name" value="RHODANESE_1"/>
    <property type="match status" value="1"/>
</dbReference>
<dbReference type="PROSITE" id="PS00683">
    <property type="entry name" value="RHODANESE_2"/>
    <property type="match status" value="1"/>
</dbReference>
<dbReference type="PROSITE" id="PS50206">
    <property type="entry name" value="RHODANESE_3"/>
    <property type="match status" value="2"/>
</dbReference>
<keyword id="KW-1185">Reference proteome</keyword>
<keyword id="KW-0677">Repeat</keyword>
<keyword id="KW-0808">Transferase</keyword>